<accession>C3PAG9</accession>
<dbReference type="EMBL" id="CP001598">
    <property type="protein sequence ID" value="ACQ49154.1"/>
    <property type="molecule type" value="Genomic_DNA"/>
</dbReference>
<dbReference type="RefSeq" id="WP_001203687.1">
    <property type="nucleotide sequence ID" value="NC_012659.1"/>
</dbReference>
<dbReference type="SMR" id="C3PAG9"/>
<dbReference type="GeneID" id="93006530"/>
<dbReference type="KEGG" id="bai:BAA_4835"/>
<dbReference type="HOGENOM" id="CLU_108412_0_0_9"/>
<dbReference type="GO" id="GO:0005524">
    <property type="term" value="F:ATP binding"/>
    <property type="evidence" value="ECO:0007669"/>
    <property type="project" value="UniProtKB-KW"/>
</dbReference>
<dbReference type="GO" id="GO:0003677">
    <property type="term" value="F:DNA binding"/>
    <property type="evidence" value="ECO:0007669"/>
    <property type="project" value="UniProtKB-KW"/>
</dbReference>
<dbReference type="GO" id="GO:0008270">
    <property type="term" value="F:zinc ion binding"/>
    <property type="evidence" value="ECO:0007669"/>
    <property type="project" value="UniProtKB-UniRule"/>
</dbReference>
<dbReference type="GO" id="GO:0045892">
    <property type="term" value="P:negative regulation of DNA-templated transcription"/>
    <property type="evidence" value="ECO:0007669"/>
    <property type="project" value="UniProtKB-UniRule"/>
</dbReference>
<dbReference type="HAMAP" id="MF_00440">
    <property type="entry name" value="NrdR"/>
    <property type="match status" value="1"/>
</dbReference>
<dbReference type="InterPro" id="IPR005144">
    <property type="entry name" value="ATP-cone_dom"/>
</dbReference>
<dbReference type="InterPro" id="IPR055173">
    <property type="entry name" value="NrdR-like_N"/>
</dbReference>
<dbReference type="InterPro" id="IPR003796">
    <property type="entry name" value="RNR_NrdR-like"/>
</dbReference>
<dbReference type="NCBIfam" id="TIGR00244">
    <property type="entry name" value="transcriptional regulator NrdR"/>
    <property type="match status" value="1"/>
</dbReference>
<dbReference type="PANTHER" id="PTHR30455">
    <property type="entry name" value="TRANSCRIPTIONAL REPRESSOR NRDR"/>
    <property type="match status" value="1"/>
</dbReference>
<dbReference type="PANTHER" id="PTHR30455:SF2">
    <property type="entry name" value="TRANSCRIPTIONAL REPRESSOR NRDR"/>
    <property type="match status" value="1"/>
</dbReference>
<dbReference type="Pfam" id="PF03477">
    <property type="entry name" value="ATP-cone"/>
    <property type="match status" value="1"/>
</dbReference>
<dbReference type="Pfam" id="PF22811">
    <property type="entry name" value="Zn_ribbon_NrdR"/>
    <property type="match status" value="1"/>
</dbReference>
<dbReference type="PROSITE" id="PS51161">
    <property type="entry name" value="ATP_CONE"/>
    <property type="match status" value="1"/>
</dbReference>
<evidence type="ECO:0000255" key="1">
    <source>
        <dbReference type="HAMAP-Rule" id="MF_00440"/>
    </source>
</evidence>
<sequence>MRCPSCSHNGTRVLDSRPVDEGRSIRRRRECESCLSRFTTFERVEESPLIVVKKEGTREEFNKEKILRGLIKACEKRPVSLRQLEEVTQSVERELRNLGISEVKSDMIGEIVMEELRDIDDVAYVRFASVYRQFKDLNVFIEELKDILQKERE</sequence>
<feature type="chain" id="PRO_1000191778" description="Transcriptional repressor NrdR">
    <location>
        <begin position="1"/>
        <end position="153"/>
    </location>
</feature>
<feature type="domain" description="ATP-cone" evidence="1">
    <location>
        <begin position="49"/>
        <end position="139"/>
    </location>
</feature>
<feature type="zinc finger region" evidence="1">
    <location>
        <begin position="3"/>
        <end position="34"/>
    </location>
</feature>
<name>NRDR_BACAA</name>
<reference key="1">
    <citation type="submission" date="2009-04" db="EMBL/GenBank/DDBJ databases">
        <title>Genome sequence of Bacillus anthracis A0248.</title>
        <authorList>
            <person name="Dodson R.J."/>
            <person name="Munk A.C."/>
            <person name="Bruce D."/>
            <person name="Detter C."/>
            <person name="Tapia R."/>
            <person name="Sutton G."/>
            <person name="Sims D."/>
            <person name="Brettin T."/>
        </authorList>
    </citation>
    <scope>NUCLEOTIDE SEQUENCE [LARGE SCALE GENOMIC DNA]</scope>
    <source>
        <strain>A0248</strain>
    </source>
</reference>
<gene>
    <name evidence="1" type="primary">nrdR</name>
    <name type="ordered locus">BAA_4835</name>
</gene>
<organism>
    <name type="scientific">Bacillus anthracis (strain A0248)</name>
    <dbReference type="NCBI Taxonomy" id="592021"/>
    <lineage>
        <taxon>Bacteria</taxon>
        <taxon>Bacillati</taxon>
        <taxon>Bacillota</taxon>
        <taxon>Bacilli</taxon>
        <taxon>Bacillales</taxon>
        <taxon>Bacillaceae</taxon>
        <taxon>Bacillus</taxon>
        <taxon>Bacillus cereus group</taxon>
    </lineage>
</organism>
<comment type="function">
    <text evidence="1">Negatively regulates transcription of bacterial ribonucleotide reductase nrd genes and operons by binding to NrdR-boxes.</text>
</comment>
<comment type="cofactor">
    <cofactor evidence="1">
        <name>Zn(2+)</name>
        <dbReference type="ChEBI" id="CHEBI:29105"/>
    </cofactor>
    <text evidence="1">Binds 1 zinc ion.</text>
</comment>
<comment type="similarity">
    <text evidence="1">Belongs to the NrdR family.</text>
</comment>
<proteinExistence type="inferred from homology"/>
<keyword id="KW-0067">ATP-binding</keyword>
<keyword id="KW-0238">DNA-binding</keyword>
<keyword id="KW-0479">Metal-binding</keyword>
<keyword id="KW-0547">Nucleotide-binding</keyword>
<keyword id="KW-0678">Repressor</keyword>
<keyword id="KW-0804">Transcription</keyword>
<keyword id="KW-0805">Transcription regulation</keyword>
<keyword id="KW-0862">Zinc</keyword>
<keyword id="KW-0863">Zinc-finger</keyword>
<protein>
    <recommendedName>
        <fullName evidence="1">Transcriptional repressor NrdR</fullName>
    </recommendedName>
</protein>